<keyword id="KW-0494">Milk protein</keyword>
<keyword id="KW-0597">Phosphoprotein</keyword>
<keyword id="KW-0964">Secreted</keyword>
<keyword id="KW-0732">Signal</keyword>
<comment type="function">
    <text evidence="1">Important role in determination of the surface properties of the casein micelles.</text>
</comment>
<comment type="subcellular location">
    <subcellularLocation>
        <location>Secreted</location>
    </subcellularLocation>
</comment>
<comment type="tissue specificity">
    <text>Mammary gland specific. Secreted in milk.</text>
</comment>
<comment type="similarity">
    <text evidence="3">Belongs to the beta-casein family.</text>
</comment>
<organism>
    <name type="scientific">Bubalus bubalis</name>
    <name type="common">Domestic water buffalo</name>
    <dbReference type="NCBI Taxonomy" id="89462"/>
    <lineage>
        <taxon>Eukaryota</taxon>
        <taxon>Metazoa</taxon>
        <taxon>Chordata</taxon>
        <taxon>Craniata</taxon>
        <taxon>Vertebrata</taxon>
        <taxon>Euteleostomi</taxon>
        <taxon>Mammalia</taxon>
        <taxon>Eutheria</taxon>
        <taxon>Laurasiatheria</taxon>
        <taxon>Artiodactyla</taxon>
        <taxon>Ruminantia</taxon>
        <taxon>Pecora</taxon>
        <taxon>Bovidae</taxon>
        <taxon>Bovinae</taxon>
        <taxon>Bubalus</taxon>
    </lineage>
</organism>
<sequence>MKVLILACLVALALARELEELNVPGEIVESLSSSEESITHINKKIEKFQSEEQQQMEDELQDKIHPFAQTQSLVYPFPGPIPKSLPQNIPPLTQTPVVVPPFLQPEIMGVSKVKEAMAPKHKEMPFPKYPVEPFTESQSLTLTDVENLHLPLPLLQSWMHQPPQPLPPTVMFPPQSVLSLSQSKVLPVPQKAVPYPQRDMPIQAFLLYQEPVLGPVRGPFPIIV</sequence>
<gene>
    <name type="primary">CSN2</name>
</gene>
<dbReference type="EMBL" id="AJ005165">
    <property type="protein sequence ID" value="CAA06408.1"/>
    <property type="molecule type" value="mRNA"/>
</dbReference>
<dbReference type="EMBL" id="AJ005432">
    <property type="protein sequence ID" value="CAA06535.1"/>
    <property type="molecule type" value="mRNA"/>
</dbReference>
<dbReference type="EMBL" id="DQ317447">
    <property type="protein sequence ID" value="ABC47037.1"/>
    <property type="molecule type" value="mRNA"/>
</dbReference>
<dbReference type="EMBL" id="DQ631829">
    <property type="protein sequence ID" value="ABG02276.1"/>
    <property type="molecule type" value="mRNA"/>
</dbReference>
<dbReference type="Allergome" id="1259">
    <property type="allergen name" value="Bub b 8"/>
</dbReference>
<dbReference type="GO" id="GO:0005615">
    <property type="term" value="C:extracellular space"/>
    <property type="evidence" value="ECO:0007669"/>
    <property type="project" value="TreeGrafter"/>
</dbReference>
<dbReference type="InterPro" id="IPR001588">
    <property type="entry name" value="Casein"/>
</dbReference>
<dbReference type="InterPro" id="IPR016345">
    <property type="entry name" value="Casein_beta"/>
</dbReference>
<dbReference type="InterPro" id="IPR031305">
    <property type="entry name" value="Casein_CS"/>
</dbReference>
<dbReference type="PANTHER" id="PTHR11500">
    <property type="entry name" value="BETA CASEIN"/>
    <property type="match status" value="1"/>
</dbReference>
<dbReference type="PANTHER" id="PTHR11500:SF0">
    <property type="entry name" value="BETA-CASEIN"/>
    <property type="match status" value="1"/>
</dbReference>
<dbReference type="Pfam" id="PF00363">
    <property type="entry name" value="Casein"/>
    <property type="match status" value="1"/>
</dbReference>
<dbReference type="PIRSF" id="PIRSF002372">
    <property type="entry name" value="Beta-casein"/>
    <property type="match status" value="1"/>
</dbReference>
<dbReference type="PROSITE" id="PS00306">
    <property type="entry name" value="CASEIN_ALPHA_BETA"/>
    <property type="match status" value="1"/>
</dbReference>
<feature type="signal peptide" evidence="1">
    <location>
        <begin position="1"/>
        <end position="15"/>
    </location>
</feature>
<feature type="chain" id="PRO_0000004471" description="Beta-casein">
    <location>
        <begin position="16"/>
        <end position="224"/>
    </location>
</feature>
<feature type="modified residue" description="Phosphoserine" evidence="2">
    <location>
        <position position="30"/>
    </location>
</feature>
<feature type="modified residue" description="Phosphoserine" evidence="2">
    <location>
        <position position="32"/>
    </location>
</feature>
<feature type="modified residue" description="Phosphoserine" evidence="2">
    <location>
        <position position="33"/>
    </location>
</feature>
<feature type="modified residue" description="Phosphoserine" evidence="2">
    <location>
        <position position="34"/>
    </location>
</feature>
<feature type="sequence conflict" description="In Ref. 2; CAA06535." evidence="3" ref="2">
    <original>M</original>
    <variation>T</variation>
    <location>
        <position position="117"/>
    </location>
</feature>
<name>CASB_BUBBU</name>
<reference key="1">
    <citation type="submission" date="1998-05" db="EMBL/GenBank/DDBJ databases">
        <title>Isolation of mRNA from buffalo milk.</title>
        <authorList>
            <person name="Klotz A."/>
            <person name="Krause I."/>
            <person name="Einspanier R."/>
        </authorList>
    </citation>
    <scope>NUCLEOTIDE SEQUENCE [MRNA]</scope>
    <source>
        <tissue>Mammary gland</tissue>
    </source>
</reference>
<reference key="2">
    <citation type="submission" date="1998-10" db="EMBL/GenBank/DDBJ databases">
        <title>cDNA cloning and sequencing of beta-casein gene in B. bubalis.</title>
        <authorList>
            <person name="Das P."/>
            <person name="Garg L.C."/>
        </authorList>
    </citation>
    <scope>NUCLEOTIDE SEQUENCE [MRNA]</scope>
    <source>
        <tissue>Mammary gland</tissue>
    </source>
</reference>
<reference key="3">
    <citation type="submission" date="2005-12" db="EMBL/GenBank/DDBJ databases">
        <title>Sequence analysis of beta-casein gene of Indian riverine buffalo (bubalus bubalis).</title>
        <authorList>
            <person name="Mishra B.P."/>
            <person name="Mukesh M."/>
            <person name="Kataria R.S."/>
            <person name="Kumar V."/>
            <person name="Pandey D."/>
            <person name="Ahlawat S.P.S."/>
        </authorList>
    </citation>
    <scope>NUCLEOTIDE SEQUENCE [MRNA]</scope>
    <source>
        <tissue>Mammary gland</tissue>
    </source>
</reference>
<reference key="4">
    <citation type="submission" date="2006-05" db="EMBL/GenBank/DDBJ databases">
        <title>Characterization of buffalo beta-casein gene.</title>
        <authorList>
            <person name="Bhattacharya T.K."/>
            <person name="Kumar P."/>
            <person name="Sharma A."/>
        </authorList>
    </citation>
    <scope>NUCLEOTIDE SEQUENCE [MRNA]</scope>
    <source>
        <tissue>Mammary gland</tissue>
    </source>
</reference>
<protein>
    <recommendedName>
        <fullName>Beta-casein</fullName>
    </recommendedName>
</protein>
<proteinExistence type="evidence at transcript level"/>
<evidence type="ECO:0000250" key="1"/>
<evidence type="ECO:0000250" key="2">
    <source>
        <dbReference type="UniProtKB" id="P05814"/>
    </source>
</evidence>
<evidence type="ECO:0000305" key="3"/>
<accession>Q9TSI0</accession>
<accession>O62824</accession>
<accession>Q2PMW0</accession>